<sequence>MESESIRRMGNACIPLKRIAYFLCLFSVVLLTEGKKPAKPKCPAVCTCSKDNALCENARSIPRTVPPDVISLSFVRSGFTEISEGSFLFTPSLQLLLFTSNSFDVISDDAFIGLPHLEYLFIENNNIKSISRHTFRGLKSLIHLSLANNNLQTLPKDIFKGLDSLTNVDLRGNSFNCDCKLKWLVEWLGHTNATVEDIYCEGPPEYKKRKINSLSPKDFDCIITEFAKSQDLPYQSLSIDTFSYLNDEYVVIAQPFTGKCIFLEWDHVEKTFRNYDNITGTSTVVCKPIVIDTQLYVIVAQLFGGSHIYKRDGFANKFIKIQDIEVLKIRKPNDIETFKIEDNWYFVVADSSKAGFTTIYKWNGNGFYSHQSLHAWYRDTDVEYLEIARPPLTLRTPHLILSSSSQRPVIYQWSKATQLFINQTDIPNMEDVYAVKHFSVKGDVYICLTRFIGDSKVMKWGGSSFQDIQRMPSRGSMVFQPLQINNYQYAILGSDYSFTQVYNWDAEKAKFVKFQELNVQAPRSFTHVSINKRNFLFASSFKGNTQIYKHVIVDLSA</sequence>
<gene>
    <name type="primary">Lgi1</name>
</gene>
<reference key="1">
    <citation type="journal article" date="2002" name="Trends Biochem. Sci.">
        <title>The novel EPTP repeat defines a superfamily of proteins implicated in epileptic disorders.</title>
        <authorList>
            <person name="Staub E."/>
            <person name="Perez-Tur J."/>
            <person name="Siebert R."/>
            <person name="Nobile C."/>
            <person name="Moschonas N.K."/>
            <person name="Deloukas P."/>
            <person name="Hinzmann B."/>
        </authorList>
    </citation>
    <scope>NUCLEOTIDE SEQUENCE [MRNA]</scope>
    <source>
        <strain>Wistar</strain>
    </source>
</reference>
<reference key="2">
    <citation type="journal article" date="2004" name="Genome Res.">
        <title>The status, quality, and expansion of the NIH full-length cDNA project: the Mammalian Gene Collection (MGC).</title>
        <authorList>
            <consortium name="The MGC Project Team"/>
        </authorList>
    </citation>
    <scope>NUCLEOTIDE SEQUENCE [LARGE SCALE MRNA]</scope>
    <source>
        <tissue>Brain</tissue>
    </source>
</reference>
<reference key="3">
    <citation type="journal article" date="2006" name="Neuron">
        <title>The epilepsy-linked Lgi1 protein assembles into presynaptic Kv1 channels and inhibits inactivation by Kvbeta1.</title>
        <authorList>
            <person name="Schulte U."/>
            <person name="Thumfart J.-O."/>
            <person name="Kloecker N."/>
            <person name="Sailer C.A."/>
            <person name="Bildl W."/>
            <person name="Biniossek M."/>
            <person name="Dehn D."/>
            <person name="Deller T."/>
            <person name="Eble S."/>
            <person name="Abbass K."/>
            <person name="Wangler T."/>
            <person name="Knaus H.-G."/>
            <person name="Fakler B."/>
        </authorList>
    </citation>
    <scope>FUNCTION</scope>
    <scope>INTERACTION WITH KCNA1; KCNA4 AND KCNAB1</scope>
    <scope>TISSUE SPECIFICITY</scope>
    <scope>SUBCELLULAR LOCATION</scope>
</reference>
<reference key="4">
    <citation type="journal article" date="2006" name="Science">
        <title>Epilepsy-related ligand/receptor complex LGI1 and ADAM22 regulate synaptic transmission.</title>
        <authorList>
            <person name="Fukata Y."/>
            <person name="Adesnik H."/>
            <person name="Iwanaga T."/>
            <person name="Bredt D.S."/>
            <person name="Nicoll R.A."/>
            <person name="Fukata M."/>
        </authorList>
    </citation>
    <scope>FUNCTION</scope>
    <scope>SUBCELLULAR LOCATION</scope>
    <scope>SUBUNIT</scope>
    <scope>INTERACTION WITH ADAM22; DLG4/PSD95 AND CACNG2</scope>
    <scope>MUTAGENESIS OF GLU-383</scope>
</reference>
<keyword id="KW-0963">Cytoplasm</keyword>
<keyword id="KW-0325">Glycoprotein</keyword>
<keyword id="KW-0433">Leucine-rich repeat</keyword>
<keyword id="KW-1185">Reference proteome</keyword>
<keyword id="KW-0677">Repeat</keyword>
<keyword id="KW-0964">Secreted</keyword>
<keyword id="KW-0732">Signal</keyword>
<keyword id="KW-0770">Synapse</keyword>
<comment type="function">
    <text evidence="1 5 6">Plays a role in suppressing the production of MMP1/3 through the phosphatidylinositol 3-kinase/ERK pathway (By similarity). Regulates voltage-gated potassium channels assembled from KCNA1, KCNA4 and KCNAB1. It slows down channel inactivation by precluding channel closure mediated by the KCNAB1 subunit. Ligand for ADAM22 that positively regulates synaptic transmission mediated by AMPA-type glutamate receptors.</text>
</comment>
<comment type="subunit">
    <text evidence="1 5 6">Oligomer. Interacts with KCNA1 within a complex containing KCNA1, KCNA4 and KCNAB1. Can bind to ADAM11 and ADAM23 (By similarity). Part of a complex containing ADAM22, DLG4/PSD95 and CACNG2 (stargazin).</text>
</comment>
<comment type="subcellular location">
    <subcellularLocation>
        <location evidence="6">Secreted</location>
    </subcellularLocation>
    <subcellularLocation>
        <location evidence="5">Synapse</location>
    </subcellularLocation>
    <subcellularLocation>
        <location evidence="2">Cytoplasm</location>
    </subcellularLocation>
</comment>
<comment type="tissue specificity">
    <text evidence="5">Expressed in brain. High levels found in hippocampus, thalamic nuclei, neocortex, and molecular and granule cell layers of the cerebellum.</text>
</comment>
<comment type="PTM">
    <text evidence="1">Glycosylated.</text>
</comment>
<proteinExistence type="evidence at protein level"/>
<name>LGI1_RAT</name>
<evidence type="ECO:0000250" key="1"/>
<evidence type="ECO:0000250" key="2">
    <source>
        <dbReference type="UniProtKB" id="Q9JIA1"/>
    </source>
</evidence>
<evidence type="ECO:0000255" key="3"/>
<evidence type="ECO:0000255" key="4">
    <source>
        <dbReference type="PROSITE-ProRule" id="PRU00075"/>
    </source>
</evidence>
<evidence type="ECO:0000269" key="5">
    <source>
    </source>
</evidence>
<evidence type="ECO:0000269" key="6">
    <source>
    </source>
</evidence>
<feature type="signal peptide" evidence="3">
    <location>
        <begin position="1"/>
        <end position="34"/>
    </location>
</feature>
<feature type="chain" id="PRO_0000017707" description="Leucine-rich glioma-inactivated protein 1">
    <location>
        <begin position="35"/>
        <end position="557"/>
    </location>
</feature>
<feature type="domain" description="LRRNT">
    <location>
        <begin position="35"/>
        <end position="72"/>
    </location>
</feature>
<feature type="repeat" description="LRR 1">
    <location>
        <begin position="92"/>
        <end position="113"/>
    </location>
</feature>
<feature type="repeat" description="LRR 2">
    <location>
        <begin position="116"/>
        <end position="137"/>
    </location>
</feature>
<feature type="repeat" description="LRR 3">
    <location>
        <begin position="140"/>
        <end position="161"/>
    </location>
</feature>
<feature type="domain" description="LRRCT">
    <location>
        <begin position="173"/>
        <end position="223"/>
    </location>
</feature>
<feature type="repeat" description="EAR 1" evidence="4">
    <location>
        <begin position="225"/>
        <end position="267"/>
    </location>
</feature>
<feature type="repeat" description="EAR 2" evidence="4">
    <location>
        <begin position="271"/>
        <end position="313"/>
    </location>
</feature>
<feature type="repeat" description="EAR 3" evidence="4">
    <location>
        <begin position="317"/>
        <end position="364"/>
    </location>
</feature>
<feature type="repeat" description="EAR 4" evidence="4">
    <location>
        <begin position="366"/>
        <end position="415"/>
    </location>
</feature>
<feature type="repeat" description="EAR 5" evidence="4">
    <location>
        <begin position="419"/>
        <end position="462"/>
    </location>
</feature>
<feature type="repeat" description="EAR 6" evidence="4">
    <location>
        <begin position="464"/>
        <end position="506"/>
    </location>
</feature>
<feature type="repeat" description="EAR 7" evidence="4">
    <location>
        <begin position="510"/>
        <end position="552"/>
    </location>
</feature>
<feature type="glycosylation site" description="N-linked (GlcNAc...) asparagine" evidence="3">
    <location>
        <position position="192"/>
    </location>
</feature>
<feature type="glycosylation site" description="N-linked (GlcNAc...) asparagine" evidence="3">
    <location>
        <position position="277"/>
    </location>
</feature>
<feature type="glycosylation site" description="N-linked (GlcNAc...) asparagine" evidence="3">
    <location>
        <position position="422"/>
    </location>
</feature>
<feature type="mutagenesis site" description="Fails to bind to ADAM22." evidence="6">
    <original>E</original>
    <variation>A</variation>
    <location>
        <position position="383"/>
    </location>
</feature>
<dbReference type="EMBL" id="AJ487517">
    <property type="protein sequence ID" value="CAD31785.1"/>
    <property type="molecule type" value="mRNA"/>
</dbReference>
<dbReference type="EMBL" id="BC089222">
    <property type="protein sequence ID" value="AAH89222.1"/>
    <property type="molecule type" value="mRNA"/>
</dbReference>
<dbReference type="RefSeq" id="NP_665712.1">
    <property type="nucleotide sequence ID" value="NM_145769.4"/>
</dbReference>
<dbReference type="SMR" id="Q8K4Y5"/>
<dbReference type="BioGRID" id="251653">
    <property type="interactions" value="1"/>
</dbReference>
<dbReference type="CORUM" id="Q8K4Y5"/>
<dbReference type="FunCoup" id="Q8K4Y5">
    <property type="interactions" value="1422"/>
</dbReference>
<dbReference type="STRING" id="10116.ENSRNOP00000020411"/>
<dbReference type="GlyCosmos" id="Q8K4Y5">
    <property type="glycosylation" value="3 sites, No reported glycans"/>
</dbReference>
<dbReference type="GlyGen" id="Q8K4Y5">
    <property type="glycosylation" value="3 sites"/>
</dbReference>
<dbReference type="iPTMnet" id="Q8K4Y5"/>
<dbReference type="PhosphoSitePlus" id="Q8K4Y5"/>
<dbReference type="SwissPalm" id="Q8K4Y5"/>
<dbReference type="PaxDb" id="10116-ENSRNOP00000020411"/>
<dbReference type="ABCD" id="Q8K4Y5">
    <property type="antibodies" value="1 sequenced antibody"/>
</dbReference>
<dbReference type="Ensembl" id="ENSRNOT00000113976.1">
    <property type="protein sequence ID" value="ENSRNOP00000078389.1"/>
    <property type="gene ID" value="ENSRNOG00000014758.8"/>
</dbReference>
<dbReference type="GeneID" id="252892"/>
<dbReference type="KEGG" id="rno:252892"/>
<dbReference type="UCSC" id="RGD:628742">
    <property type="organism name" value="rat"/>
</dbReference>
<dbReference type="AGR" id="RGD:628742"/>
<dbReference type="CTD" id="9211"/>
<dbReference type="RGD" id="628742">
    <property type="gene designation" value="Lgi1"/>
</dbReference>
<dbReference type="eggNOG" id="ENOG502REXX">
    <property type="taxonomic scope" value="Eukaryota"/>
</dbReference>
<dbReference type="GeneTree" id="ENSGT00940000159793"/>
<dbReference type="HOGENOM" id="CLU_036403_0_0_1"/>
<dbReference type="InParanoid" id="Q8K4Y5"/>
<dbReference type="OMA" id="VEMNFRN"/>
<dbReference type="OrthoDB" id="6066926at2759"/>
<dbReference type="PhylomeDB" id="Q8K4Y5"/>
<dbReference type="TreeFam" id="TF333155"/>
<dbReference type="Reactome" id="R-RNO-5682910">
    <property type="pathway name" value="LGI-ADAM interactions"/>
</dbReference>
<dbReference type="PRO" id="PR:Q8K4Y5"/>
<dbReference type="Proteomes" id="UP000002494">
    <property type="component" value="Chromosome 1"/>
</dbReference>
<dbReference type="Bgee" id="ENSRNOG00000014758">
    <property type="expression patterns" value="Expressed in cerebellum and 11 other cell types or tissues"/>
</dbReference>
<dbReference type="GO" id="GO:0043194">
    <property type="term" value="C:axon initial segment"/>
    <property type="evidence" value="ECO:0000314"/>
    <property type="project" value="RGD"/>
</dbReference>
<dbReference type="GO" id="GO:0005737">
    <property type="term" value="C:cytoplasm"/>
    <property type="evidence" value="ECO:0000250"/>
    <property type="project" value="UniProtKB"/>
</dbReference>
<dbReference type="GO" id="GO:0030425">
    <property type="term" value="C:dendrite"/>
    <property type="evidence" value="ECO:0000314"/>
    <property type="project" value="RGD"/>
</dbReference>
<dbReference type="GO" id="GO:0005615">
    <property type="term" value="C:extracellular space"/>
    <property type="evidence" value="ECO:0000314"/>
    <property type="project" value="UniProtKB"/>
</dbReference>
<dbReference type="GO" id="GO:0098978">
    <property type="term" value="C:glutamatergic synapse"/>
    <property type="evidence" value="ECO:0000266"/>
    <property type="project" value="RGD"/>
</dbReference>
<dbReference type="GO" id="GO:0043083">
    <property type="term" value="C:synaptic cleft"/>
    <property type="evidence" value="ECO:0000266"/>
    <property type="project" value="RGD"/>
</dbReference>
<dbReference type="GO" id="GO:0048018">
    <property type="term" value="F:receptor ligand activity"/>
    <property type="evidence" value="ECO:0000250"/>
    <property type="project" value="UniProtKB"/>
</dbReference>
<dbReference type="GO" id="GO:0005102">
    <property type="term" value="F:signaling receptor binding"/>
    <property type="evidence" value="ECO:0000266"/>
    <property type="project" value="RGD"/>
</dbReference>
<dbReference type="GO" id="GO:0007411">
    <property type="term" value="P:axon guidance"/>
    <property type="evidence" value="ECO:0000266"/>
    <property type="project" value="RGD"/>
</dbReference>
<dbReference type="GO" id="GO:0031175">
    <property type="term" value="P:neuron projection development"/>
    <property type="evidence" value="ECO:0000266"/>
    <property type="project" value="RGD"/>
</dbReference>
<dbReference type="GO" id="GO:0099645">
    <property type="term" value="P:neurotransmitter receptor localization to postsynaptic specialization membrane"/>
    <property type="evidence" value="ECO:0000266"/>
    <property type="project" value="RGD"/>
</dbReference>
<dbReference type="GO" id="GO:0030307">
    <property type="term" value="P:positive regulation of cell growth"/>
    <property type="evidence" value="ECO:0000266"/>
    <property type="project" value="RGD"/>
</dbReference>
<dbReference type="GO" id="GO:0050806">
    <property type="term" value="P:positive regulation of synaptic transmission"/>
    <property type="evidence" value="ECO:0000314"/>
    <property type="project" value="UniProtKB"/>
</dbReference>
<dbReference type="FunFam" id="3.80.10.10:FF:000017">
    <property type="entry name" value="leucine-rich repeat LGI family member 3"/>
    <property type="match status" value="1"/>
</dbReference>
<dbReference type="Gene3D" id="3.80.10.10">
    <property type="entry name" value="Ribonuclease Inhibitor"/>
    <property type="match status" value="1"/>
</dbReference>
<dbReference type="InterPro" id="IPR000483">
    <property type="entry name" value="Cys-rich_flank_reg_C"/>
</dbReference>
<dbReference type="InterPro" id="IPR009039">
    <property type="entry name" value="EAR"/>
</dbReference>
<dbReference type="InterPro" id="IPR005492">
    <property type="entry name" value="EPTP"/>
</dbReference>
<dbReference type="InterPro" id="IPR001611">
    <property type="entry name" value="Leu-rich_rpt"/>
</dbReference>
<dbReference type="InterPro" id="IPR003591">
    <property type="entry name" value="Leu-rich_rpt_typical-subtyp"/>
</dbReference>
<dbReference type="InterPro" id="IPR051295">
    <property type="entry name" value="LGI_related"/>
</dbReference>
<dbReference type="InterPro" id="IPR032675">
    <property type="entry name" value="LRR_dom_sf"/>
</dbReference>
<dbReference type="PANTHER" id="PTHR24367:SF17">
    <property type="entry name" value="LEUCINE-RICH GLIOMA-INACTIVATED PROTEIN 1"/>
    <property type="match status" value="1"/>
</dbReference>
<dbReference type="PANTHER" id="PTHR24367">
    <property type="entry name" value="LEUCINE-RICH REPEAT-CONTAINING PROTEIN"/>
    <property type="match status" value="1"/>
</dbReference>
<dbReference type="Pfam" id="PF03736">
    <property type="entry name" value="EPTP"/>
    <property type="match status" value="7"/>
</dbReference>
<dbReference type="Pfam" id="PF13855">
    <property type="entry name" value="LRR_8"/>
    <property type="match status" value="1"/>
</dbReference>
<dbReference type="SMART" id="SM00369">
    <property type="entry name" value="LRR_TYP"/>
    <property type="match status" value="3"/>
</dbReference>
<dbReference type="SMART" id="SM00082">
    <property type="entry name" value="LRRCT"/>
    <property type="match status" value="1"/>
</dbReference>
<dbReference type="SUPFAM" id="SSF52058">
    <property type="entry name" value="L domain-like"/>
    <property type="match status" value="1"/>
</dbReference>
<dbReference type="PROSITE" id="PS50912">
    <property type="entry name" value="EAR"/>
    <property type="match status" value="7"/>
</dbReference>
<accession>Q8K4Y5</accession>
<accession>Q5FWS7</accession>
<protein>
    <recommendedName>
        <fullName>Leucine-rich glioma-inactivated protein 1</fullName>
    </recommendedName>
</protein>
<organism>
    <name type="scientific">Rattus norvegicus</name>
    <name type="common">Rat</name>
    <dbReference type="NCBI Taxonomy" id="10116"/>
    <lineage>
        <taxon>Eukaryota</taxon>
        <taxon>Metazoa</taxon>
        <taxon>Chordata</taxon>
        <taxon>Craniata</taxon>
        <taxon>Vertebrata</taxon>
        <taxon>Euteleostomi</taxon>
        <taxon>Mammalia</taxon>
        <taxon>Eutheria</taxon>
        <taxon>Euarchontoglires</taxon>
        <taxon>Glires</taxon>
        <taxon>Rodentia</taxon>
        <taxon>Myomorpha</taxon>
        <taxon>Muroidea</taxon>
        <taxon>Muridae</taxon>
        <taxon>Murinae</taxon>
        <taxon>Rattus</taxon>
    </lineage>
</organism>